<dbReference type="EMBL" id="CP000383">
    <property type="protein sequence ID" value="ABG60399.1"/>
    <property type="molecule type" value="Genomic_DNA"/>
</dbReference>
<dbReference type="RefSeq" id="WP_011586508.1">
    <property type="nucleotide sequence ID" value="NC_008255.1"/>
</dbReference>
<dbReference type="SMR" id="Q11QB5"/>
<dbReference type="STRING" id="269798.CHU_3159"/>
<dbReference type="KEGG" id="chu:CHU_3159"/>
<dbReference type="eggNOG" id="COG0090">
    <property type="taxonomic scope" value="Bacteria"/>
</dbReference>
<dbReference type="HOGENOM" id="CLU_036235_2_1_10"/>
<dbReference type="OrthoDB" id="9778722at2"/>
<dbReference type="Proteomes" id="UP000001822">
    <property type="component" value="Chromosome"/>
</dbReference>
<dbReference type="GO" id="GO:0015934">
    <property type="term" value="C:large ribosomal subunit"/>
    <property type="evidence" value="ECO:0007669"/>
    <property type="project" value="InterPro"/>
</dbReference>
<dbReference type="GO" id="GO:0019843">
    <property type="term" value="F:rRNA binding"/>
    <property type="evidence" value="ECO:0007669"/>
    <property type="project" value="UniProtKB-UniRule"/>
</dbReference>
<dbReference type="GO" id="GO:0003735">
    <property type="term" value="F:structural constituent of ribosome"/>
    <property type="evidence" value="ECO:0007669"/>
    <property type="project" value="InterPro"/>
</dbReference>
<dbReference type="GO" id="GO:0016740">
    <property type="term" value="F:transferase activity"/>
    <property type="evidence" value="ECO:0007669"/>
    <property type="project" value="InterPro"/>
</dbReference>
<dbReference type="GO" id="GO:0002181">
    <property type="term" value="P:cytoplasmic translation"/>
    <property type="evidence" value="ECO:0007669"/>
    <property type="project" value="TreeGrafter"/>
</dbReference>
<dbReference type="FunFam" id="2.30.30.30:FF:000001">
    <property type="entry name" value="50S ribosomal protein L2"/>
    <property type="match status" value="1"/>
</dbReference>
<dbReference type="FunFam" id="2.40.50.140:FF:000003">
    <property type="entry name" value="50S ribosomal protein L2"/>
    <property type="match status" value="1"/>
</dbReference>
<dbReference type="FunFam" id="4.10.950.10:FF:000001">
    <property type="entry name" value="50S ribosomal protein L2"/>
    <property type="match status" value="1"/>
</dbReference>
<dbReference type="Gene3D" id="2.30.30.30">
    <property type="match status" value="1"/>
</dbReference>
<dbReference type="Gene3D" id="2.40.50.140">
    <property type="entry name" value="Nucleic acid-binding proteins"/>
    <property type="match status" value="1"/>
</dbReference>
<dbReference type="Gene3D" id="4.10.950.10">
    <property type="entry name" value="Ribosomal protein L2, domain 3"/>
    <property type="match status" value="1"/>
</dbReference>
<dbReference type="HAMAP" id="MF_01320_B">
    <property type="entry name" value="Ribosomal_uL2_B"/>
    <property type="match status" value="1"/>
</dbReference>
<dbReference type="InterPro" id="IPR012340">
    <property type="entry name" value="NA-bd_OB-fold"/>
</dbReference>
<dbReference type="InterPro" id="IPR014722">
    <property type="entry name" value="Rib_uL2_dom2"/>
</dbReference>
<dbReference type="InterPro" id="IPR002171">
    <property type="entry name" value="Ribosomal_uL2"/>
</dbReference>
<dbReference type="InterPro" id="IPR005880">
    <property type="entry name" value="Ribosomal_uL2_bac/org-type"/>
</dbReference>
<dbReference type="InterPro" id="IPR022669">
    <property type="entry name" value="Ribosomal_uL2_C"/>
</dbReference>
<dbReference type="InterPro" id="IPR022671">
    <property type="entry name" value="Ribosomal_uL2_CS"/>
</dbReference>
<dbReference type="InterPro" id="IPR014726">
    <property type="entry name" value="Ribosomal_uL2_dom3"/>
</dbReference>
<dbReference type="InterPro" id="IPR022666">
    <property type="entry name" value="Ribosomal_uL2_RNA-bd_dom"/>
</dbReference>
<dbReference type="InterPro" id="IPR008991">
    <property type="entry name" value="Translation_prot_SH3-like_sf"/>
</dbReference>
<dbReference type="NCBIfam" id="TIGR01171">
    <property type="entry name" value="rplB_bact"/>
    <property type="match status" value="1"/>
</dbReference>
<dbReference type="PANTHER" id="PTHR13691:SF5">
    <property type="entry name" value="LARGE RIBOSOMAL SUBUNIT PROTEIN UL2M"/>
    <property type="match status" value="1"/>
</dbReference>
<dbReference type="PANTHER" id="PTHR13691">
    <property type="entry name" value="RIBOSOMAL PROTEIN L2"/>
    <property type="match status" value="1"/>
</dbReference>
<dbReference type="Pfam" id="PF00181">
    <property type="entry name" value="Ribosomal_L2"/>
    <property type="match status" value="1"/>
</dbReference>
<dbReference type="Pfam" id="PF03947">
    <property type="entry name" value="Ribosomal_L2_C"/>
    <property type="match status" value="1"/>
</dbReference>
<dbReference type="PIRSF" id="PIRSF002158">
    <property type="entry name" value="Ribosomal_L2"/>
    <property type="match status" value="1"/>
</dbReference>
<dbReference type="SMART" id="SM01383">
    <property type="entry name" value="Ribosomal_L2"/>
    <property type="match status" value="1"/>
</dbReference>
<dbReference type="SMART" id="SM01382">
    <property type="entry name" value="Ribosomal_L2_C"/>
    <property type="match status" value="1"/>
</dbReference>
<dbReference type="SUPFAM" id="SSF50249">
    <property type="entry name" value="Nucleic acid-binding proteins"/>
    <property type="match status" value="1"/>
</dbReference>
<dbReference type="SUPFAM" id="SSF50104">
    <property type="entry name" value="Translation proteins SH3-like domain"/>
    <property type="match status" value="1"/>
</dbReference>
<dbReference type="PROSITE" id="PS00467">
    <property type="entry name" value="RIBOSOMAL_L2"/>
    <property type="match status" value="1"/>
</dbReference>
<feature type="chain" id="PRO_0000309907" description="Large ribosomal subunit protein uL2">
    <location>
        <begin position="1"/>
        <end position="279"/>
    </location>
</feature>
<feature type="region of interest" description="Disordered" evidence="2">
    <location>
        <begin position="223"/>
        <end position="279"/>
    </location>
</feature>
<feature type="compositionally biased region" description="Basic residues" evidence="2">
    <location>
        <begin position="268"/>
        <end position="279"/>
    </location>
</feature>
<protein>
    <recommendedName>
        <fullName evidence="1">Large ribosomal subunit protein uL2</fullName>
    </recommendedName>
    <alternativeName>
        <fullName evidence="3">50S ribosomal protein L2</fullName>
    </alternativeName>
</protein>
<organism>
    <name type="scientific">Cytophaga hutchinsonii (strain ATCC 33406 / DSM 1761 / CIP 103989 / NBRC 15051 / NCIMB 9469 / D465)</name>
    <dbReference type="NCBI Taxonomy" id="269798"/>
    <lineage>
        <taxon>Bacteria</taxon>
        <taxon>Pseudomonadati</taxon>
        <taxon>Bacteroidota</taxon>
        <taxon>Cytophagia</taxon>
        <taxon>Cytophagales</taxon>
        <taxon>Cytophagaceae</taxon>
        <taxon>Cytophaga</taxon>
    </lineage>
</organism>
<comment type="function">
    <text evidence="1">One of the primary rRNA binding proteins. Required for association of the 30S and 50S subunits to form the 70S ribosome, for tRNA binding and peptide bond formation. It has been suggested to have peptidyltransferase activity; this is somewhat controversial. Makes several contacts with the 16S rRNA in the 70S ribosome.</text>
</comment>
<comment type="subunit">
    <text evidence="1">Part of the 50S ribosomal subunit. Forms a bridge to the 30S subunit in the 70S ribosome.</text>
</comment>
<comment type="similarity">
    <text evidence="1">Belongs to the universal ribosomal protein uL2 family.</text>
</comment>
<sequence length="279" mass="30148">MSLKKFRPITPGTRFRVAASYDDVTTSTPEKSLVVSIKKSGGRNSQGKMTMRYIGGGHKQQYRIIDFKRDKHAIPAVVKTIEYDPNRTARIALLSYADGEKRYIIAPTGLEVGNTILSGPGIAPEVGNCLPLSDIPLGTVVHNIELKPGKGAAMARSAGTYAQLVAREGKYATLKLPSGEMRMVLVVCYASIGTVSNADHMNLTKGKAGATRWAGRRPRVRGVAMNPVDHPMGGGEGRSSGGHPRSRKGLYAKGGKTRSANKYSKNMIVKKRVNKRLSK</sequence>
<proteinExistence type="inferred from homology"/>
<gene>
    <name evidence="1" type="primary">rplB</name>
    <name type="ordered locus">CHU_3159</name>
</gene>
<name>RL2_CYTH3</name>
<reference key="1">
    <citation type="journal article" date="2007" name="Appl. Environ. Microbiol.">
        <title>Genome sequence of the cellulolytic gliding bacterium Cytophaga hutchinsonii.</title>
        <authorList>
            <person name="Xie G."/>
            <person name="Bruce D.C."/>
            <person name="Challacombe J.F."/>
            <person name="Chertkov O."/>
            <person name="Detter J.C."/>
            <person name="Gilna P."/>
            <person name="Han C.S."/>
            <person name="Lucas S."/>
            <person name="Misra M."/>
            <person name="Myers G.L."/>
            <person name="Richardson P."/>
            <person name="Tapia R."/>
            <person name="Thayer N."/>
            <person name="Thompson L.S."/>
            <person name="Brettin T.S."/>
            <person name="Henrissat B."/>
            <person name="Wilson D.B."/>
            <person name="McBride M.J."/>
        </authorList>
    </citation>
    <scope>NUCLEOTIDE SEQUENCE [LARGE SCALE GENOMIC DNA]</scope>
    <source>
        <strain>ATCC 33406 / DSM 1761 / JCM 20678 / CIP 103989 / IAM 12607 / NBRC 15051 / NCIMB 9469 / D465</strain>
    </source>
</reference>
<keyword id="KW-1185">Reference proteome</keyword>
<keyword id="KW-0687">Ribonucleoprotein</keyword>
<keyword id="KW-0689">Ribosomal protein</keyword>
<keyword id="KW-0694">RNA-binding</keyword>
<keyword id="KW-0699">rRNA-binding</keyword>
<evidence type="ECO:0000255" key="1">
    <source>
        <dbReference type="HAMAP-Rule" id="MF_01320"/>
    </source>
</evidence>
<evidence type="ECO:0000256" key="2">
    <source>
        <dbReference type="SAM" id="MobiDB-lite"/>
    </source>
</evidence>
<evidence type="ECO:0000305" key="3"/>
<accession>Q11QB5</accession>